<gene>
    <name type="primary">MT-CYB</name>
    <name type="synonym">COB</name>
    <name type="synonym">CYTB</name>
    <name type="synonym">MTCYB</name>
</gene>
<evidence type="ECO:0000250" key="1"/>
<evidence type="ECO:0000250" key="2">
    <source>
        <dbReference type="UniProtKB" id="P00157"/>
    </source>
</evidence>
<evidence type="ECO:0000255" key="3">
    <source>
        <dbReference type="PROSITE-ProRule" id="PRU00967"/>
    </source>
</evidence>
<evidence type="ECO:0000255" key="4">
    <source>
        <dbReference type="PROSITE-ProRule" id="PRU00968"/>
    </source>
</evidence>
<name>CYB_GEOPI</name>
<dbReference type="EMBL" id="AF158698">
    <property type="protein sequence ID" value="AAD45707.1"/>
    <property type="molecule type" value="Genomic_DNA"/>
</dbReference>
<dbReference type="SMR" id="Q9TEZ5"/>
<dbReference type="GO" id="GO:0005743">
    <property type="term" value="C:mitochondrial inner membrane"/>
    <property type="evidence" value="ECO:0007669"/>
    <property type="project" value="UniProtKB-SubCell"/>
</dbReference>
<dbReference type="GO" id="GO:0045275">
    <property type="term" value="C:respiratory chain complex III"/>
    <property type="evidence" value="ECO:0007669"/>
    <property type="project" value="InterPro"/>
</dbReference>
<dbReference type="GO" id="GO:0046872">
    <property type="term" value="F:metal ion binding"/>
    <property type="evidence" value="ECO:0007669"/>
    <property type="project" value="UniProtKB-KW"/>
</dbReference>
<dbReference type="GO" id="GO:0008121">
    <property type="term" value="F:ubiquinol-cytochrome-c reductase activity"/>
    <property type="evidence" value="ECO:0007669"/>
    <property type="project" value="InterPro"/>
</dbReference>
<dbReference type="GO" id="GO:0006122">
    <property type="term" value="P:mitochondrial electron transport, ubiquinol to cytochrome c"/>
    <property type="evidence" value="ECO:0007669"/>
    <property type="project" value="TreeGrafter"/>
</dbReference>
<dbReference type="CDD" id="cd00290">
    <property type="entry name" value="cytochrome_b_C"/>
    <property type="match status" value="1"/>
</dbReference>
<dbReference type="CDD" id="cd00284">
    <property type="entry name" value="Cytochrome_b_N"/>
    <property type="match status" value="1"/>
</dbReference>
<dbReference type="FunFam" id="1.20.810.10:FF:000002">
    <property type="entry name" value="Cytochrome b"/>
    <property type="match status" value="1"/>
</dbReference>
<dbReference type="Gene3D" id="1.20.810.10">
    <property type="entry name" value="Cytochrome Bc1 Complex, Chain C"/>
    <property type="match status" value="1"/>
</dbReference>
<dbReference type="InterPro" id="IPR005798">
    <property type="entry name" value="Cyt_b/b6_C"/>
</dbReference>
<dbReference type="InterPro" id="IPR036150">
    <property type="entry name" value="Cyt_b/b6_C_sf"/>
</dbReference>
<dbReference type="InterPro" id="IPR005797">
    <property type="entry name" value="Cyt_b/b6_N"/>
</dbReference>
<dbReference type="InterPro" id="IPR027387">
    <property type="entry name" value="Cytb/b6-like_sf"/>
</dbReference>
<dbReference type="InterPro" id="IPR030689">
    <property type="entry name" value="Cytochrome_b"/>
</dbReference>
<dbReference type="InterPro" id="IPR048260">
    <property type="entry name" value="Cytochrome_b_C_euk/bac"/>
</dbReference>
<dbReference type="InterPro" id="IPR048259">
    <property type="entry name" value="Cytochrome_b_N_euk/bac"/>
</dbReference>
<dbReference type="InterPro" id="IPR016174">
    <property type="entry name" value="Di-haem_cyt_TM"/>
</dbReference>
<dbReference type="PANTHER" id="PTHR19271">
    <property type="entry name" value="CYTOCHROME B"/>
    <property type="match status" value="1"/>
</dbReference>
<dbReference type="PANTHER" id="PTHR19271:SF16">
    <property type="entry name" value="CYTOCHROME B"/>
    <property type="match status" value="1"/>
</dbReference>
<dbReference type="Pfam" id="PF00032">
    <property type="entry name" value="Cytochrom_B_C"/>
    <property type="match status" value="1"/>
</dbReference>
<dbReference type="Pfam" id="PF00033">
    <property type="entry name" value="Cytochrome_B"/>
    <property type="match status" value="1"/>
</dbReference>
<dbReference type="PIRSF" id="PIRSF038885">
    <property type="entry name" value="COB"/>
    <property type="match status" value="1"/>
</dbReference>
<dbReference type="SUPFAM" id="SSF81648">
    <property type="entry name" value="a domain/subunit of cytochrome bc1 complex (Ubiquinol-cytochrome c reductase)"/>
    <property type="match status" value="1"/>
</dbReference>
<dbReference type="SUPFAM" id="SSF81342">
    <property type="entry name" value="Transmembrane di-heme cytochromes"/>
    <property type="match status" value="1"/>
</dbReference>
<dbReference type="PROSITE" id="PS51003">
    <property type="entry name" value="CYTB_CTER"/>
    <property type="match status" value="1"/>
</dbReference>
<dbReference type="PROSITE" id="PS51002">
    <property type="entry name" value="CYTB_NTER"/>
    <property type="match status" value="1"/>
</dbReference>
<geneLocation type="mitochondrion"/>
<proteinExistence type="inferred from homology"/>
<organism>
    <name type="scientific">Geomys pinetis</name>
    <name type="common">Southeastern pocket gopher</name>
    <name type="synonym">Geomys colonus</name>
    <dbReference type="NCBI Taxonomy" id="100306"/>
    <lineage>
        <taxon>Eukaryota</taxon>
        <taxon>Metazoa</taxon>
        <taxon>Chordata</taxon>
        <taxon>Craniata</taxon>
        <taxon>Vertebrata</taxon>
        <taxon>Euteleostomi</taxon>
        <taxon>Mammalia</taxon>
        <taxon>Eutheria</taxon>
        <taxon>Euarchontoglires</taxon>
        <taxon>Glires</taxon>
        <taxon>Rodentia</taxon>
        <taxon>Castorimorpha</taxon>
        <taxon>Geomyidae</taxon>
        <taxon>Geomys</taxon>
    </lineage>
</organism>
<protein>
    <recommendedName>
        <fullName>Cytochrome b</fullName>
    </recommendedName>
    <alternativeName>
        <fullName>Complex III subunit 3</fullName>
    </alternativeName>
    <alternativeName>
        <fullName>Complex III subunit III</fullName>
    </alternativeName>
    <alternativeName>
        <fullName>Cytochrome b-c1 complex subunit 3</fullName>
    </alternativeName>
    <alternativeName>
        <fullName>Ubiquinol-cytochrome-c reductase complex cytochrome b subunit</fullName>
    </alternativeName>
</protein>
<accession>Q9TEZ5</accession>
<comment type="function">
    <text evidence="2">Component of the ubiquinol-cytochrome c reductase complex (complex III or cytochrome b-c1 complex) that is part of the mitochondrial respiratory chain. The b-c1 complex mediates electron transfer from ubiquinol to cytochrome c. Contributes to the generation of a proton gradient across the mitochondrial membrane that is then used for ATP synthesis.</text>
</comment>
<comment type="cofactor">
    <cofactor evidence="2">
        <name>heme b</name>
        <dbReference type="ChEBI" id="CHEBI:60344"/>
    </cofactor>
    <text evidence="2">Binds 2 heme b groups non-covalently.</text>
</comment>
<comment type="subunit">
    <text evidence="2">The cytochrome bc1 complex contains 11 subunits: 3 respiratory subunits (MT-CYB, CYC1 and UQCRFS1), 2 core proteins (UQCRC1 and UQCRC2) and 6 low-molecular weight proteins (UQCRH/QCR6, UQCRB/QCR7, UQCRQ/QCR8, UQCR10/QCR9, UQCR11/QCR10 and a cleavage product of UQCRFS1). This cytochrome bc1 complex then forms a dimer.</text>
</comment>
<comment type="subcellular location">
    <subcellularLocation>
        <location evidence="2">Mitochondrion inner membrane</location>
        <topology evidence="2">Multi-pass membrane protein</topology>
    </subcellularLocation>
</comment>
<comment type="miscellaneous">
    <text evidence="1">Heme 1 (or BL or b562) is low-potential and absorbs at about 562 nm, and heme 2 (or BH or b566) is high-potential and absorbs at about 566 nm.</text>
</comment>
<comment type="similarity">
    <text evidence="3 4">Belongs to the cytochrome b family.</text>
</comment>
<comment type="caution">
    <text evidence="2">The full-length protein contains only eight transmembrane helices, not nine as predicted by bioinformatics tools.</text>
</comment>
<feature type="chain" id="PRO_0000060998" description="Cytochrome b">
    <location>
        <begin position="1"/>
        <end position="379"/>
    </location>
</feature>
<feature type="transmembrane region" description="Helical" evidence="2">
    <location>
        <begin position="33"/>
        <end position="53"/>
    </location>
</feature>
<feature type="transmembrane region" description="Helical" evidence="2">
    <location>
        <begin position="77"/>
        <end position="98"/>
    </location>
</feature>
<feature type="transmembrane region" description="Helical" evidence="2">
    <location>
        <begin position="113"/>
        <end position="133"/>
    </location>
</feature>
<feature type="transmembrane region" description="Helical" evidence="2">
    <location>
        <begin position="178"/>
        <end position="198"/>
    </location>
</feature>
<feature type="transmembrane region" description="Helical" evidence="2">
    <location>
        <begin position="226"/>
        <end position="246"/>
    </location>
</feature>
<feature type="transmembrane region" description="Helical" evidence="2">
    <location>
        <begin position="288"/>
        <end position="308"/>
    </location>
</feature>
<feature type="transmembrane region" description="Helical" evidence="2">
    <location>
        <begin position="320"/>
        <end position="340"/>
    </location>
</feature>
<feature type="transmembrane region" description="Helical" evidence="2">
    <location>
        <begin position="347"/>
        <end position="367"/>
    </location>
</feature>
<feature type="binding site" description="axial binding residue" evidence="2">
    <location>
        <position position="83"/>
    </location>
    <ligand>
        <name>heme b</name>
        <dbReference type="ChEBI" id="CHEBI:60344"/>
        <label>b562</label>
    </ligand>
    <ligandPart>
        <name>Fe</name>
        <dbReference type="ChEBI" id="CHEBI:18248"/>
    </ligandPart>
</feature>
<feature type="binding site" description="axial binding residue" evidence="2">
    <location>
        <position position="97"/>
    </location>
    <ligand>
        <name>heme b</name>
        <dbReference type="ChEBI" id="CHEBI:60344"/>
        <label>b566</label>
    </ligand>
    <ligandPart>
        <name>Fe</name>
        <dbReference type="ChEBI" id="CHEBI:18248"/>
    </ligandPart>
</feature>
<feature type="binding site" description="axial binding residue" evidence="2">
    <location>
        <position position="182"/>
    </location>
    <ligand>
        <name>heme b</name>
        <dbReference type="ChEBI" id="CHEBI:60344"/>
        <label>b562</label>
    </ligand>
    <ligandPart>
        <name>Fe</name>
        <dbReference type="ChEBI" id="CHEBI:18248"/>
    </ligandPart>
</feature>
<feature type="binding site" description="axial binding residue" evidence="2">
    <location>
        <position position="196"/>
    </location>
    <ligand>
        <name>heme b</name>
        <dbReference type="ChEBI" id="CHEBI:60344"/>
        <label>b566</label>
    </ligand>
    <ligandPart>
        <name>Fe</name>
        <dbReference type="ChEBI" id="CHEBI:18248"/>
    </ligandPart>
</feature>
<feature type="binding site" evidence="2">
    <location>
        <position position="201"/>
    </location>
    <ligand>
        <name>a ubiquinone</name>
        <dbReference type="ChEBI" id="CHEBI:16389"/>
    </ligand>
</feature>
<sequence length="379" mass="42924">MAIMRKSHPLMKIVNHAFIDLPTPPNISGWWNFGSLLGLCLILQISTGLFLAMHYTSDTLTAFSSVTHICRDVNYGWLIRYMHANGASLFFICLYIHIGRGIYYGSYLYTETWNIGILLLFLTMATAFTGYILPWGQMSFWGATVITNLLSAIPYIGQDLVEWIWGGFSVDKATLTRFFAFHFILPFIIAALAMVHLLFLHETGSNNPLGIPSDCGKVPFHPYYSTKDFLGVIMLLMLFLTLVLFFPDKLGDPDNYMPANPLNTPPHIKPEWYFLFAYAILRSVPNKLGGVVALVMSILVLALLPYLHTSKQRSLMFRPLSQTLFWMLVSDLFLLTWIGGQPVEPPFIIIGQVASIMYFSIILLLMPMAGLIENKLLKW</sequence>
<reference key="1">
    <citation type="journal article" date="2000" name="J. Mammal.">
        <title>A new subspecies of pocket gopher (genus Geomys) from the Ozark mountains of Arkansas with comments on its historical biogeography.</title>
        <authorList>
            <person name="Elrod D.A."/>
            <person name="Zimmerman E.G."/>
            <person name="Sudman P.D."/>
            <person name="Heidt G.A."/>
        </authorList>
    </citation>
    <scope>NUCLEOTIDE SEQUENCE [GENOMIC DNA]</scope>
</reference>
<keyword id="KW-0249">Electron transport</keyword>
<keyword id="KW-0349">Heme</keyword>
<keyword id="KW-0408">Iron</keyword>
<keyword id="KW-0472">Membrane</keyword>
<keyword id="KW-0479">Metal-binding</keyword>
<keyword id="KW-0496">Mitochondrion</keyword>
<keyword id="KW-0999">Mitochondrion inner membrane</keyword>
<keyword id="KW-0679">Respiratory chain</keyword>
<keyword id="KW-0812">Transmembrane</keyword>
<keyword id="KW-1133">Transmembrane helix</keyword>
<keyword id="KW-0813">Transport</keyword>
<keyword id="KW-0830">Ubiquinone</keyword>